<proteinExistence type="inferred from homology"/>
<name>BGLS_RUMAL</name>
<evidence type="ECO:0000250" key="1"/>
<evidence type="ECO:0000305" key="2"/>
<accession>P15885</accession>
<protein>
    <recommendedName>
        <fullName>Beta-glucosidase</fullName>
        <ecNumber>3.2.1.21</ecNumber>
    </recommendedName>
    <alternativeName>
        <fullName>Beta-D-glucoside glucohydrolase</fullName>
    </alternativeName>
    <alternativeName>
        <fullName>Cellobiase</fullName>
    </alternativeName>
    <alternativeName>
        <fullName>Gentiobiase</fullName>
    </alternativeName>
</protein>
<keyword id="KW-0119">Carbohydrate metabolism</keyword>
<keyword id="KW-0136">Cellulose degradation</keyword>
<keyword id="KW-0326">Glycosidase</keyword>
<keyword id="KW-0378">Hydrolase</keyword>
<keyword id="KW-0624">Polysaccharide degradation</keyword>
<reference key="1">
    <citation type="journal article" date="1990" name="Nucleic Acids Res.">
        <title>DNA sequence of a beta-glucosidase from Ruminococcus albus.</title>
        <authorList>
            <person name="Ohmiya K."/>
            <person name="Takano M."/>
            <person name="Shimizu S."/>
        </authorList>
    </citation>
    <scope>NUCLEOTIDE SEQUENCE [GENOMIC DNA]</scope>
    <source>
        <strain>F-40</strain>
    </source>
</reference>
<feature type="chain" id="PRO_0000210779" description="Beta-glucosidase">
    <location>
        <begin position="1"/>
        <end position="947"/>
    </location>
</feature>
<feature type="active site" evidence="1">
    <location>
        <position position="696"/>
    </location>
</feature>
<dbReference type="EC" id="3.2.1.21"/>
<dbReference type="EMBL" id="X15415">
    <property type="protein sequence ID" value="CAA33461.1"/>
    <property type="molecule type" value="Genomic_DNA"/>
</dbReference>
<dbReference type="PIR" id="S08243">
    <property type="entry name" value="S08243"/>
</dbReference>
<dbReference type="SMR" id="P15885"/>
<dbReference type="CAZy" id="GH3">
    <property type="family name" value="Glycoside Hydrolase Family 3"/>
</dbReference>
<dbReference type="eggNOG" id="COG1472">
    <property type="taxonomic scope" value="Bacteria"/>
</dbReference>
<dbReference type="UniPathway" id="UPA00696"/>
<dbReference type="GO" id="GO:0008422">
    <property type="term" value="F:beta-glucosidase activity"/>
    <property type="evidence" value="ECO:0007669"/>
    <property type="project" value="UniProtKB-EC"/>
</dbReference>
<dbReference type="GO" id="GO:0030245">
    <property type="term" value="P:cellulose catabolic process"/>
    <property type="evidence" value="ECO:0007669"/>
    <property type="project" value="UniProtKB-UniPathway"/>
</dbReference>
<dbReference type="Gene3D" id="3.40.50.1700">
    <property type="entry name" value="Glycoside hydrolase family 3 C-terminal domain"/>
    <property type="match status" value="1"/>
</dbReference>
<dbReference type="Gene3D" id="3.20.20.300">
    <property type="entry name" value="Glycoside hydrolase, family 3, N-terminal domain"/>
    <property type="match status" value="1"/>
</dbReference>
<dbReference type="Gene3D" id="2.60.40.10">
    <property type="entry name" value="Immunoglobulins"/>
    <property type="match status" value="1"/>
</dbReference>
<dbReference type="InterPro" id="IPR050288">
    <property type="entry name" value="Cellulose_deg_GH3"/>
</dbReference>
<dbReference type="InterPro" id="IPR026891">
    <property type="entry name" value="Fn3-like"/>
</dbReference>
<dbReference type="InterPro" id="IPR019800">
    <property type="entry name" value="Glyco_hydro_3_AS"/>
</dbReference>
<dbReference type="InterPro" id="IPR002772">
    <property type="entry name" value="Glyco_hydro_3_C"/>
</dbReference>
<dbReference type="InterPro" id="IPR036881">
    <property type="entry name" value="Glyco_hydro_3_C_sf"/>
</dbReference>
<dbReference type="InterPro" id="IPR001764">
    <property type="entry name" value="Glyco_hydro_3_N"/>
</dbReference>
<dbReference type="InterPro" id="IPR036962">
    <property type="entry name" value="Glyco_hydro_3_N_sf"/>
</dbReference>
<dbReference type="InterPro" id="IPR017853">
    <property type="entry name" value="Glycoside_hydrolase_SF"/>
</dbReference>
<dbReference type="InterPro" id="IPR013783">
    <property type="entry name" value="Ig-like_fold"/>
</dbReference>
<dbReference type="PANTHER" id="PTHR42715">
    <property type="entry name" value="BETA-GLUCOSIDASE"/>
    <property type="match status" value="1"/>
</dbReference>
<dbReference type="PANTHER" id="PTHR42715:SF10">
    <property type="entry name" value="BETA-GLUCOSIDASE"/>
    <property type="match status" value="1"/>
</dbReference>
<dbReference type="Pfam" id="PF14310">
    <property type="entry name" value="Fn3-like"/>
    <property type="match status" value="1"/>
</dbReference>
<dbReference type="Pfam" id="PF00933">
    <property type="entry name" value="Glyco_hydro_3"/>
    <property type="match status" value="1"/>
</dbReference>
<dbReference type="Pfam" id="PF01915">
    <property type="entry name" value="Glyco_hydro_3_C"/>
    <property type="match status" value="1"/>
</dbReference>
<dbReference type="PRINTS" id="PR00133">
    <property type="entry name" value="GLHYDRLASE3"/>
</dbReference>
<dbReference type="SMART" id="SM01217">
    <property type="entry name" value="Fn3_like"/>
    <property type="match status" value="1"/>
</dbReference>
<dbReference type="SUPFAM" id="SSF51445">
    <property type="entry name" value="(Trans)glycosidases"/>
    <property type="match status" value="1"/>
</dbReference>
<dbReference type="SUPFAM" id="SSF52279">
    <property type="entry name" value="Beta-D-glucan exohydrolase, C-terminal domain"/>
    <property type="match status" value="1"/>
</dbReference>
<dbReference type="PROSITE" id="PS00775">
    <property type="entry name" value="GLYCOSYL_HYDROL_F3"/>
    <property type="match status" value="1"/>
</dbReference>
<organism>
    <name type="scientific">Ruminococcus albus</name>
    <dbReference type="NCBI Taxonomy" id="1264"/>
    <lineage>
        <taxon>Bacteria</taxon>
        <taxon>Bacillati</taxon>
        <taxon>Bacillota</taxon>
        <taxon>Clostridia</taxon>
        <taxon>Eubacteriales</taxon>
        <taxon>Oscillospiraceae</taxon>
        <taxon>Ruminococcus</taxon>
    </lineage>
</organism>
<comment type="catalytic activity">
    <reaction>
        <text>Hydrolysis of terminal, non-reducing beta-D-glucosyl residues with release of beta-D-glucose.</text>
        <dbReference type="EC" id="3.2.1.21"/>
    </reaction>
</comment>
<comment type="pathway">
    <text>Glycan metabolism; cellulose degradation.</text>
</comment>
<comment type="similarity">
    <text evidence="2">Belongs to the glycosyl hydrolase 3 family.</text>
</comment>
<sequence length="947" mass="104278">MIKLDWNEYLEKAAEVNAEGAVLLVNNGVLPLDKNAVTQVFGRIQLDYYKSGTGSGGMVNVAKVTGITDGLIEAGAKLNEDVLKAYKDYVAEHPYDYGEGWGGEPWCQEEMPLDDSLVKRAAESSDTAICIIGRTAGEEQDNSCKAGSYLLTDGEKAILRKVRDNFSKMVILLNVGNIIDMGFIDEFSPDAVMYVWQGGMTGGTGTARVLLGEVSPCGKLPDTIAYDITDYPSDKNFHNRDVDIYAEDIFVGYRYFDTFAKDRVRFPFGYGLSYTQFEISAEGRKTDDGVVITAKVKNIGSAAGKEVVQVYLEAPNCKLGKAARVLCGFEKTKVLAPNEEQTLTIEVTERDIASYDDSGITGNAFAWVEEAGEYTFYAGSDVRSAKECFAFTLDSTKVIEQLEQALAPVTPFKRMVRTAEGLSYEDTPLSKVDEAARRLGYLPAETAYTGDKGIALSDVAHGKNTLDEFIAQLDDNDLNCLVRGEGMCSPKVTPGTAAAFGGVAKHLEELGIPAGCCSDGPSGMRLDVGTKAFSLPNGTLIAATFNKSLITELFTYLGLEMRANKVDCLLGPGMNIHRHPLNGRNFEYFSEDPFLTGTMAAAELEGLHSVGVEGTIKHFCANNQETNRHFIDSVASERALREIYLKGFEIAVRKSKARSVMTTYGKVNGLWTAGSFDLNTMILRKQWGFDGFTMTDWWANINDRGCAPDKNNFAAMVRAQNDVYMVCADGESGSDNVIAALADGRLTRAELQRSARNILSFMMSTHAMARKLGEDEAVEVINKPAETVDDGEGDRVFLLDGDLTIDMSGVKTERNLDYSFTVDVAQFGQYRMEMTASSTQSELAQMPVTVFSMGTAWGTFTWNGTGGKPVTFAVEEMPMFSRYTIFRLHFGLGGLDMDKIVFKKIRPAEAQVCRLRISERWLQTQTYFWLKANFQSKKLLRGRRAYR</sequence>